<feature type="chain" id="PRO_0000242860" description="ATP phosphoribosyltransferase regulatory subunit">
    <location>
        <begin position="1"/>
        <end position="399"/>
    </location>
</feature>
<sequence length="399" mass="42441">MSTPVTRTQVPDGVRDRLPSEAAAMRRLSARLDNVFRAWGYREVSTPVIEYLEAVAAGAANWGRREDLYQFFDRKGRTLALRPDMTTPIARLMATRLADEPLPLRLSYFAPVFRHRELRAGATSEIWQAGVELVGAPGEAADAEVISLACAAVRAADLTGFRIGLGHVGVVEGLFESAGVDPQAAAVLKEAMVARDLVAFEQGVARAGLSGERAERLLALVHFHGSYAEAVARFGGVGGRVAEALQHLGRVLEVLEALGVAEQVNLDLGLVRSLGYYTGVVFEGYLPGIGAPVLGGGRYDNLVAEFGRPLAATGFALEVDRLLMAQEQQGALAAEPGLDAVIACPPGQEAAAMAWAARLRAQGLAVEVDFLDRTGEELAAYARARAAARVLRPGVPSIH</sequence>
<reference key="1">
    <citation type="journal article" date="2004" name="Nucleic Acids Res.">
        <title>Genome sequence of Symbiobacterium thermophilum, an uncultivable bacterium that depends on microbial commensalism.</title>
        <authorList>
            <person name="Ueda K."/>
            <person name="Yamashita A."/>
            <person name="Ishikawa J."/>
            <person name="Shimada M."/>
            <person name="Watsuji T."/>
            <person name="Morimura K."/>
            <person name="Ikeda H."/>
            <person name="Hattori M."/>
            <person name="Beppu T."/>
        </authorList>
    </citation>
    <scope>NUCLEOTIDE SEQUENCE [LARGE SCALE GENOMIC DNA]</scope>
    <source>
        <strain>DSM 24528 / JCM 14929 / IAM 14863 / T</strain>
    </source>
</reference>
<comment type="function">
    <text evidence="1">Required for the first step of histidine biosynthesis. May allow the feedback regulation of ATP phosphoribosyltransferase activity by histidine.</text>
</comment>
<comment type="pathway">
    <text evidence="1">Amino-acid biosynthesis; L-histidine biosynthesis; L-histidine from 5-phospho-alpha-D-ribose 1-diphosphate: step 1/9.</text>
</comment>
<comment type="subunit">
    <text evidence="1">Heteromultimer composed of HisG and HisZ subunits.</text>
</comment>
<comment type="subcellular location">
    <subcellularLocation>
        <location evidence="1">Cytoplasm</location>
    </subcellularLocation>
</comment>
<comment type="miscellaneous">
    <text>This function is generally fulfilled by the C-terminal part of HisG, which is missing in some bacteria such as this one.</text>
</comment>
<comment type="similarity">
    <text evidence="1">Belongs to the class-II aminoacyl-tRNA synthetase family. HisZ subfamily.</text>
</comment>
<proteinExistence type="inferred from homology"/>
<dbReference type="EMBL" id="AP006840">
    <property type="protein sequence ID" value="BAD41824.1"/>
    <property type="molecule type" value="Genomic_DNA"/>
</dbReference>
<dbReference type="RefSeq" id="WP_011196958.1">
    <property type="nucleotide sequence ID" value="NC_006177.1"/>
</dbReference>
<dbReference type="SMR" id="Q67KH4"/>
<dbReference type="STRING" id="292459.STH2839"/>
<dbReference type="KEGG" id="sth:STH2839"/>
<dbReference type="eggNOG" id="COG0124">
    <property type="taxonomic scope" value="Bacteria"/>
</dbReference>
<dbReference type="HOGENOM" id="CLU_025113_0_0_9"/>
<dbReference type="OrthoDB" id="9800814at2"/>
<dbReference type="UniPathway" id="UPA00031">
    <property type="reaction ID" value="UER00006"/>
</dbReference>
<dbReference type="Proteomes" id="UP000000417">
    <property type="component" value="Chromosome"/>
</dbReference>
<dbReference type="GO" id="GO:0005737">
    <property type="term" value="C:cytoplasm"/>
    <property type="evidence" value="ECO:0007669"/>
    <property type="project" value="UniProtKB-SubCell"/>
</dbReference>
<dbReference type="GO" id="GO:0140096">
    <property type="term" value="F:catalytic activity, acting on a protein"/>
    <property type="evidence" value="ECO:0007669"/>
    <property type="project" value="UniProtKB-ARBA"/>
</dbReference>
<dbReference type="GO" id="GO:0004821">
    <property type="term" value="F:histidine-tRNA ligase activity"/>
    <property type="evidence" value="ECO:0007669"/>
    <property type="project" value="TreeGrafter"/>
</dbReference>
<dbReference type="GO" id="GO:0016740">
    <property type="term" value="F:transferase activity"/>
    <property type="evidence" value="ECO:0007669"/>
    <property type="project" value="UniProtKB-ARBA"/>
</dbReference>
<dbReference type="GO" id="GO:0006427">
    <property type="term" value="P:histidyl-tRNA aminoacylation"/>
    <property type="evidence" value="ECO:0007669"/>
    <property type="project" value="TreeGrafter"/>
</dbReference>
<dbReference type="GO" id="GO:0000105">
    <property type="term" value="P:L-histidine biosynthetic process"/>
    <property type="evidence" value="ECO:0007669"/>
    <property type="project" value="UniProtKB-UniRule"/>
</dbReference>
<dbReference type="CDD" id="cd00773">
    <property type="entry name" value="HisRS-like_core"/>
    <property type="match status" value="1"/>
</dbReference>
<dbReference type="Gene3D" id="3.30.930.10">
    <property type="entry name" value="Bira Bifunctional Protein, Domain 2"/>
    <property type="match status" value="1"/>
</dbReference>
<dbReference type="HAMAP" id="MF_00125">
    <property type="entry name" value="HisZ"/>
    <property type="match status" value="1"/>
</dbReference>
<dbReference type="InterPro" id="IPR006195">
    <property type="entry name" value="aa-tRNA-synth_II"/>
</dbReference>
<dbReference type="InterPro" id="IPR045864">
    <property type="entry name" value="aa-tRNA-synth_II/BPL/LPL"/>
</dbReference>
<dbReference type="InterPro" id="IPR041715">
    <property type="entry name" value="HisRS-like_core"/>
</dbReference>
<dbReference type="InterPro" id="IPR004516">
    <property type="entry name" value="HisRS/HisZ"/>
</dbReference>
<dbReference type="InterPro" id="IPR004517">
    <property type="entry name" value="HisZ"/>
</dbReference>
<dbReference type="NCBIfam" id="TIGR00443">
    <property type="entry name" value="hisZ_biosyn_reg"/>
    <property type="match status" value="1"/>
</dbReference>
<dbReference type="PANTHER" id="PTHR43707:SF1">
    <property type="entry name" value="HISTIDINE--TRNA LIGASE, MITOCHONDRIAL-RELATED"/>
    <property type="match status" value="1"/>
</dbReference>
<dbReference type="PANTHER" id="PTHR43707">
    <property type="entry name" value="HISTIDYL-TRNA SYNTHETASE"/>
    <property type="match status" value="1"/>
</dbReference>
<dbReference type="Pfam" id="PF13393">
    <property type="entry name" value="tRNA-synt_His"/>
    <property type="match status" value="1"/>
</dbReference>
<dbReference type="PIRSF" id="PIRSF001549">
    <property type="entry name" value="His-tRNA_synth"/>
    <property type="match status" value="1"/>
</dbReference>
<dbReference type="SUPFAM" id="SSF55681">
    <property type="entry name" value="Class II aaRS and biotin synthetases"/>
    <property type="match status" value="1"/>
</dbReference>
<dbReference type="PROSITE" id="PS50862">
    <property type="entry name" value="AA_TRNA_LIGASE_II"/>
    <property type="match status" value="1"/>
</dbReference>
<gene>
    <name evidence="1" type="primary">hisZ</name>
    <name type="synonym">hisS2</name>
    <name type="ordered locus">STH2839</name>
</gene>
<evidence type="ECO:0000255" key="1">
    <source>
        <dbReference type="HAMAP-Rule" id="MF_00125"/>
    </source>
</evidence>
<keyword id="KW-0028">Amino-acid biosynthesis</keyword>
<keyword id="KW-0963">Cytoplasm</keyword>
<keyword id="KW-0368">Histidine biosynthesis</keyword>
<keyword id="KW-1185">Reference proteome</keyword>
<organism>
    <name type="scientific">Symbiobacterium thermophilum (strain DSM 24528 / JCM 14929 / IAM 14863 / T)</name>
    <dbReference type="NCBI Taxonomy" id="292459"/>
    <lineage>
        <taxon>Bacteria</taxon>
        <taxon>Bacillati</taxon>
        <taxon>Bacillota</taxon>
        <taxon>Clostridia</taxon>
        <taxon>Eubacteriales</taxon>
        <taxon>Symbiobacteriaceae</taxon>
        <taxon>Symbiobacterium</taxon>
    </lineage>
</organism>
<name>HISZ_SYMTH</name>
<protein>
    <recommendedName>
        <fullName evidence="1">ATP phosphoribosyltransferase regulatory subunit</fullName>
    </recommendedName>
</protein>
<accession>Q67KH4</accession>